<evidence type="ECO:0000255" key="1">
    <source>
        <dbReference type="HAMAP-Rule" id="MF_00003"/>
    </source>
</evidence>
<organism>
    <name type="scientific">Cereibacter sphaeroides (strain KD131 / KCTC 12085)</name>
    <name type="common">Rhodobacter sphaeroides</name>
    <dbReference type="NCBI Taxonomy" id="557760"/>
    <lineage>
        <taxon>Bacteria</taxon>
        <taxon>Pseudomonadati</taxon>
        <taxon>Pseudomonadota</taxon>
        <taxon>Alphaproteobacteria</taxon>
        <taxon>Rhodobacterales</taxon>
        <taxon>Paracoccaceae</taxon>
        <taxon>Cereibacter</taxon>
    </lineage>
</organism>
<protein>
    <recommendedName>
        <fullName evidence="1">Ribosome-binding factor A</fullName>
    </recommendedName>
</protein>
<accession>B9KP41</accession>
<sequence>MAHRSHTGTGPSQRQLRVGELIRRTLADVLNRGEIHDPELNRLSITVGEVRCSPDLKVATVHVMPLGGKDVEEAIALLSKHRGELRHHITRQMTLKYAPDLRFRPDETFDRLDETRRLFSDETVMRDIRGGGEADED</sequence>
<name>RBFA_CERSK</name>
<keyword id="KW-0963">Cytoplasm</keyword>
<keyword id="KW-0690">Ribosome biogenesis</keyword>
<comment type="function">
    <text evidence="1">One of several proteins that assist in the late maturation steps of the functional core of the 30S ribosomal subunit. Associates with free 30S ribosomal subunits (but not with 30S subunits that are part of 70S ribosomes or polysomes). Required for efficient processing of 16S rRNA. May interact with the 5'-terminal helix region of 16S rRNA.</text>
</comment>
<comment type="subunit">
    <text evidence="1">Monomer. Binds 30S ribosomal subunits, but not 50S ribosomal subunits or 70S ribosomes.</text>
</comment>
<comment type="subcellular location">
    <subcellularLocation>
        <location evidence="1">Cytoplasm</location>
    </subcellularLocation>
</comment>
<comment type="similarity">
    <text evidence="1">Belongs to the RbfA family.</text>
</comment>
<reference key="1">
    <citation type="journal article" date="2009" name="J. Bacteriol.">
        <title>Complete genome sequence of Rhodobacter sphaeroides KD131.</title>
        <authorList>
            <person name="Lim S.-K."/>
            <person name="Kim S.J."/>
            <person name="Cha S.H."/>
            <person name="Oh Y.-K."/>
            <person name="Rhee H.-J."/>
            <person name="Kim M.-S."/>
            <person name="Lee J.K."/>
        </authorList>
    </citation>
    <scope>NUCLEOTIDE SEQUENCE [LARGE SCALE GENOMIC DNA]</scope>
    <source>
        <strain>KD131 / KCTC 12085</strain>
    </source>
</reference>
<feature type="chain" id="PRO_1000116212" description="Ribosome-binding factor A">
    <location>
        <begin position="1"/>
        <end position="137"/>
    </location>
</feature>
<gene>
    <name evidence="1" type="primary">rbfA</name>
    <name type="ordered locus">RSKD131_2503</name>
</gene>
<proteinExistence type="inferred from homology"/>
<dbReference type="EMBL" id="CP001150">
    <property type="protein sequence ID" value="ACM02363.1"/>
    <property type="molecule type" value="Genomic_DNA"/>
</dbReference>
<dbReference type="SMR" id="B9KP41"/>
<dbReference type="KEGG" id="rsk:RSKD131_2503"/>
<dbReference type="HOGENOM" id="CLU_089475_1_0_5"/>
<dbReference type="GO" id="GO:0005829">
    <property type="term" value="C:cytosol"/>
    <property type="evidence" value="ECO:0007669"/>
    <property type="project" value="TreeGrafter"/>
</dbReference>
<dbReference type="GO" id="GO:0043024">
    <property type="term" value="F:ribosomal small subunit binding"/>
    <property type="evidence" value="ECO:0007669"/>
    <property type="project" value="TreeGrafter"/>
</dbReference>
<dbReference type="GO" id="GO:0030490">
    <property type="term" value="P:maturation of SSU-rRNA"/>
    <property type="evidence" value="ECO:0007669"/>
    <property type="project" value="UniProtKB-UniRule"/>
</dbReference>
<dbReference type="Gene3D" id="3.30.300.20">
    <property type="match status" value="1"/>
</dbReference>
<dbReference type="HAMAP" id="MF_00003">
    <property type="entry name" value="RbfA"/>
    <property type="match status" value="1"/>
</dbReference>
<dbReference type="InterPro" id="IPR015946">
    <property type="entry name" value="KH_dom-like_a/b"/>
</dbReference>
<dbReference type="InterPro" id="IPR000238">
    <property type="entry name" value="RbfA"/>
</dbReference>
<dbReference type="InterPro" id="IPR023799">
    <property type="entry name" value="RbfA_dom_sf"/>
</dbReference>
<dbReference type="InterPro" id="IPR020053">
    <property type="entry name" value="Ribosome-bd_factorA_CS"/>
</dbReference>
<dbReference type="NCBIfam" id="NF001802">
    <property type="entry name" value="PRK00521.2-5"/>
    <property type="match status" value="1"/>
</dbReference>
<dbReference type="NCBIfam" id="TIGR00082">
    <property type="entry name" value="rbfA"/>
    <property type="match status" value="1"/>
</dbReference>
<dbReference type="PANTHER" id="PTHR33515">
    <property type="entry name" value="RIBOSOME-BINDING FACTOR A, CHLOROPLASTIC-RELATED"/>
    <property type="match status" value="1"/>
</dbReference>
<dbReference type="PANTHER" id="PTHR33515:SF1">
    <property type="entry name" value="RIBOSOME-BINDING FACTOR A, CHLOROPLASTIC-RELATED"/>
    <property type="match status" value="1"/>
</dbReference>
<dbReference type="Pfam" id="PF02033">
    <property type="entry name" value="RBFA"/>
    <property type="match status" value="1"/>
</dbReference>
<dbReference type="SUPFAM" id="SSF89919">
    <property type="entry name" value="Ribosome-binding factor A, RbfA"/>
    <property type="match status" value="1"/>
</dbReference>
<dbReference type="PROSITE" id="PS01319">
    <property type="entry name" value="RBFA"/>
    <property type="match status" value="1"/>
</dbReference>